<proteinExistence type="evidence at protein level"/>
<sequence length="1051" mass="115513">MEPWVPQTQGRTTGPSRDTNRGLQSGHYRPRLHSQYSGDKYHQWQDAHKNSKSQQDLRDDHQQSHSVSRSGEWSQPVSGADYLKGSYPSHLYSRSGYGDPYQRYHTPTPRDEYAYGNYYYHGHPQLLPEERVARQGSPYIWHEDHGDQRYFGEHHREKHNGTFGANSDTQFQFTSKNPYRDSPASVSGQEQPGEFFPESEAQKQKPLLTSKSSLLQQHESGLSSSSYELSQYMTAAPEEYEPMVSAAWRPIQADDTSATVPKAPMRFYVPHVSVSFGPGGQLVCVPPNSPADGQTALVEVHSMEVLLNDFEDQEEMRAFPGPLIREDIHKVDIMTFCQQKATQCLKSETPGSRDSALLWQLLVLLCRQNGSMVGSDIAELLMQDCKKLEKYKRQPPVANLINLTDEDWPVLSSGTRDLLTGEIPPNVDTPAQIVEKFTKLLYYGRKKEALEWAMKNHLWGHALFLASKMDPRTYNWVMSGFTSTLALNDPLQTLFQLMSGRIPQAATVCGDKQWGDWRPHLAVILSNQAGDTELYQRAIVSMGDTLAGKGLVEASHFCYLMAHVPFGHYTVKTDHLALVGSSHSQEFMKFATIEAIQRTEIFEYCQMLGRPKSFIPSFQVYKLLYASRLADYGLASQALHYCEAIGAAVLSQEGSSHPVLLAELIKLAEKLKLSDPLVLERRRGDRDLEPDWLVQLRRKHKDLEQNRTGAPRDPDSTPSDIYGAGGTTDTPYPDLSGHQNYSEDSEYSSTLWSTAEQTSLTNPLAQQSFPLQRDTYSGHMGTPVPLYSVPATHLAVTSGASGSSVAVTGTPGGRVGEDMLRTHPAFGENTMTQEPLEDPDGLEVISSLQTPAAPRVPSFSEDSAASAKEDEEGSSDGADKPSHPDASQKGKLGDGKNTKSSGFGWFSWFRSKPASSVSTSGDEDSSDSSDSEESPRASSPHHASPGLSPTPPLTSPSLPGASTFSRGTGGSILQGSSNSSGIAEGMGIGGFSGTQGVSSEFYSQPGALPPPPTLQGAVPLYNPSQVPQLPTASSLNRPNRLAQRRYPTQPC</sequence>
<evidence type="ECO:0000250" key="1"/>
<evidence type="ECO:0000250" key="2">
    <source>
        <dbReference type="UniProtKB" id="Q75N33"/>
    </source>
</evidence>
<evidence type="ECO:0000250" key="3">
    <source>
        <dbReference type="UniProtKB" id="Q96JE7"/>
    </source>
</evidence>
<evidence type="ECO:0000256" key="4">
    <source>
        <dbReference type="SAM" id="MobiDB-lite"/>
    </source>
</evidence>
<evidence type="ECO:0000269" key="5">
    <source>
    </source>
</evidence>
<evidence type="ECO:0000305" key="6"/>
<evidence type="ECO:0007744" key="7">
    <source>
    </source>
</evidence>
<evidence type="ECO:0007744" key="8">
    <source>
    </source>
</evidence>
<comment type="function">
    <text evidence="3">Plays a role in the organization of the endoplasmic reticulum exit sites (ERES), also known as transitional endoplasmic reticulum (tER). Required for secretory cargo traffic from the endoplasmic reticulum to the Golgi apparatus. Involved in peroxisome biogenesis. Regulates the transport of peroxisomal biogenesis factors PEX3 and PEX16 from the ER to peroxisomes.</text>
</comment>
<comment type="subunit">
    <text evidence="3">SEC16A and SEC16B are each present in multiple copies in a heteromeric complex. Interacts with TFG. Interacts with SEC13.</text>
</comment>
<comment type="subcellular location">
    <subcellularLocation>
        <location evidence="3">Endoplasmic reticulum membrane</location>
        <topology evidence="1">Peripheral membrane protein</topology>
    </subcellularLocation>
    <subcellularLocation>
        <location evidence="1">Golgi apparatus membrane</location>
        <topology evidence="1">Peripheral membrane protein</topology>
    </subcellularLocation>
    <text evidence="3">Localizes to endoplasmic reticulum exit sites (ERES), also known as transitional endoplasmic reticulum (tER).</text>
</comment>
<comment type="tissue specificity">
    <text evidence="5">Liver.</text>
</comment>
<comment type="similarity">
    <text evidence="6">Belongs to the SEC16 family.</text>
</comment>
<comment type="sequence caution" evidence="6">
    <conflict type="erroneous initiation">
        <sequence resource="EMBL-CDS" id="BAD32580"/>
    </conflict>
    <text>Extended N-terminus.</text>
</comment>
<reference key="1">
    <citation type="journal article" date="2001" name="Int. J. Mol. Med.">
        <title>Molecular cloning and sequencing of the cDNA coding for a novel regucalcin gene promoter region-related protein in rat, mouse and human liver.</title>
        <authorList>
            <person name="Misawa H."/>
            <person name="Yamaguchi M."/>
        </authorList>
    </citation>
    <scope>NUCLEOTIDE SEQUENCE [MRNA]</scope>
    <source>
        <tissue>Liver</tissue>
    </source>
</reference>
<reference key="2">
    <citation type="journal article" date="2004" name="DNA Res.">
        <title>Prediction of the coding sequences of mouse homologues of KIAA gene: IV. The complete nucleotide sequences of 500 mouse KIAA-homologous cDNAs identified by screening of terminal sequences of cDNA clones randomly sampled from size-fractionated libraries.</title>
        <authorList>
            <person name="Okazaki N."/>
            <person name="Kikuno R."/>
            <person name="Ohara R."/>
            <person name="Inamoto S."/>
            <person name="Koseki H."/>
            <person name="Hiraoka S."/>
            <person name="Saga Y."/>
            <person name="Seino S."/>
            <person name="Nishimura M."/>
            <person name="Kaisho T."/>
            <person name="Hoshino K."/>
            <person name="Kitamura H."/>
            <person name="Nagase T."/>
            <person name="Ohara O."/>
            <person name="Koga H."/>
        </authorList>
    </citation>
    <scope>NUCLEOTIDE SEQUENCE [LARGE SCALE MRNA]</scope>
    <source>
        <tissue>Pancreatic islet</tissue>
    </source>
</reference>
<reference key="3">
    <citation type="journal article" date="2009" name="PLoS Biol.">
        <title>Lineage-specific biology revealed by a finished genome assembly of the mouse.</title>
        <authorList>
            <person name="Church D.M."/>
            <person name="Goodstadt L."/>
            <person name="Hillier L.W."/>
            <person name="Zody M.C."/>
            <person name="Goldstein S."/>
            <person name="She X."/>
            <person name="Bult C.J."/>
            <person name="Agarwala R."/>
            <person name="Cherry J.L."/>
            <person name="DiCuccio M."/>
            <person name="Hlavina W."/>
            <person name="Kapustin Y."/>
            <person name="Meric P."/>
            <person name="Maglott D."/>
            <person name="Birtle Z."/>
            <person name="Marques A.C."/>
            <person name="Graves T."/>
            <person name="Zhou S."/>
            <person name="Teague B."/>
            <person name="Potamousis K."/>
            <person name="Churas C."/>
            <person name="Place M."/>
            <person name="Herschleb J."/>
            <person name="Runnheim R."/>
            <person name="Forrest D."/>
            <person name="Amos-Landgraf J."/>
            <person name="Schwartz D.C."/>
            <person name="Cheng Z."/>
            <person name="Lindblad-Toh K."/>
            <person name="Eichler E.E."/>
            <person name="Ponting C.P."/>
        </authorList>
    </citation>
    <scope>NUCLEOTIDE SEQUENCE [LARGE SCALE GENOMIC DNA]</scope>
    <source>
        <strain>C57BL/6J</strain>
    </source>
</reference>
<reference key="4">
    <citation type="journal article" date="2004" name="Genome Res.">
        <title>The status, quality, and expansion of the NIH full-length cDNA project: the Mammalian Gene Collection (MGC).</title>
        <authorList>
            <consortium name="The MGC Project Team"/>
        </authorList>
    </citation>
    <scope>NUCLEOTIDE SEQUENCE [LARGE SCALE MRNA]</scope>
    <source>
        <strain>FVB/N</strain>
        <tissue>Kidney</tissue>
    </source>
</reference>
<reference key="5">
    <citation type="journal article" date="2002" name="J. Cell. Biochem.">
        <title>Gene expression for a novel protein RGPR-p117 in various species: the stimulation by intracellular signaling factors.</title>
        <authorList>
            <person name="Misawa H."/>
            <person name="Yamaguchi M."/>
        </authorList>
    </citation>
    <scope>TISSUE SPECIFICITY</scope>
</reference>
<reference key="6">
    <citation type="journal article" date="2007" name="Proc. Natl. Acad. Sci. U.S.A.">
        <title>Large-scale phosphorylation analysis of mouse liver.</title>
        <authorList>
            <person name="Villen J."/>
            <person name="Beausoleil S.A."/>
            <person name="Gerber S.A."/>
            <person name="Gygi S.P."/>
        </authorList>
    </citation>
    <scope>PHOSPHORYLATION [LARGE SCALE ANALYSIS] AT SER-70; SER-182; SER-863; SER-866; SER-874 AND SER-875</scope>
    <scope>IDENTIFICATION BY MASS SPECTROMETRY [LARGE SCALE ANALYSIS]</scope>
    <source>
        <tissue>Liver</tissue>
    </source>
</reference>
<reference key="7">
    <citation type="journal article" date="2010" name="Cell">
        <title>A tissue-specific atlas of mouse protein phosphorylation and expression.</title>
        <authorList>
            <person name="Huttlin E.L."/>
            <person name="Jedrychowski M.P."/>
            <person name="Elias J.E."/>
            <person name="Goswami T."/>
            <person name="Rad R."/>
            <person name="Beausoleil S.A."/>
            <person name="Villen J."/>
            <person name="Haas W."/>
            <person name="Sowa M.E."/>
            <person name="Gygi S.P."/>
        </authorList>
    </citation>
    <scope>PHOSPHORYLATION [LARGE SCALE ANALYSIS] AT SER-182 AND SER-185</scope>
    <scope>IDENTIFICATION BY MASS SPECTROMETRY [LARGE SCALE ANALYSIS]</scope>
    <source>
        <tissue>Liver</tissue>
        <tissue>Pancreas</tissue>
    </source>
</reference>
<organism>
    <name type="scientific">Mus musculus</name>
    <name type="common">Mouse</name>
    <dbReference type="NCBI Taxonomy" id="10090"/>
    <lineage>
        <taxon>Eukaryota</taxon>
        <taxon>Metazoa</taxon>
        <taxon>Chordata</taxon>
        <taxon>Craniata</taxon>
        <taxon>Vertebrata</taxon>
        <taxon>Euteleostomi</taxon>
        <taxon>Mammalia</taxon>
        <taxon>Eutheria</taxon>
        <taxon>Euarchontoglires</taxon>
        <taxon>Glires</taxon>
        <taxon>Rodentia</taxon>
        <taxon>Myomorpha</taxon>
        <taxon>Muroidea</taxon>
        <taxon>Muridae</taxon>
        <taxon>Murinae</taxon>
        <taxon>Mus</taxon>
        <taxon>Mus</taxon>
    </lineage>
</organism>
<protein>
    <recommendedName>
        <fullName>Protein transport protein Sec16B</fullName>
    </recommendedName>
    <alternativeName>
        <fullName>Leucine zipper transcription regulator 2</fullName>
    </alternativeName>
    <alternativeName>
        <fullName>Regucalcin gene promoter region-related protein p117</fullName>
        <shortName>RGPR-p117</shortName>
    </alternativeName>
    <alternativeName>
        <fullName>SEC16 homolog B</fullName>
    </alternativeName>
</protein>
<name>SC16B_MOUSE</name>
<gene>
    <name type="primary">Sec16b</name>
    <name type="synonym">Kiaa1928</name>
    <name type="synonym">Lztr2</name>
    <name type="synonym">Rgpr</name>
</gene>
<keyword id="KW-0256">Endoplasmic reticulum</keyword>
<keyword id="KW-0931">ER-Golgi transport</keyword>
<keyword id="KW-0333">Golgi apparatus</keyword>
<keyword id="KW-0472">Membrane</keyword>
<keyword id="KW-0962">Peroxisome biogenesis</keyword>
<keyword id="KW-0597">Phosphoprotein</keyword>
<keyword id="KW-0653">Protein transport</keyword>
<keyword id="KW-1185">Reference proteome</keyword>
<keyword id="KW-0813">Transport</keyword>
<feature type="chain" id="PRO_0000341975" description="Protein transport protein Sec16B">
    <location>
        <begin position="1"/>
        <end position="1051"/>
    </location>
</feature>
<feature type="region of interest" description="Disordered" evidence="4">
    <location>
        <begin position="1"/>
        <end position="109"/>
    </location>
</feature>
<feature type="region of interest" description="Disordered" evidence="4">
    <location>
        <begin position="157"/>
        <end position="203"/>
    </location>
</feature>
<feature type="region of interest" description="Central conserved domain (CCD); required for localization to endoplasmic reticulum exit sites" evidence="3">
    <location>
        <begin position="263"/>
        <end position="708"/>
    </location>
</feature>
<feature type="region of interest" description="Disordered" evidence="4">
    <location>
        <begin position="703"/>
        <end position="754"/>
    </location>
</feature>
<feature type="region of interest" description="Disordered" evidence="4">
    <location>
        <begin position="798"/>
        <end position="820"/>
    </location>
</feature>
<feature type="region of interest" description="Disordered" evidence="4">
    <location>
        <begin position="850"/>
        <end position="1051"/>
    </location>
</feature>
<feature type="compositionally biased region" description="Polar residues" evidence="4">
    <location>
        <begin position="1"/>
        <end position="23"/>
    </location>
</feature>
<feature type="compositionally biased region" description="Basic and acidic residues" evidence="4">
    <location>
        <begin position="39"/>
        <end position="63"/>
    </location>
</feature>
<feature type="compositionally biased region" description="Polar residues" evidence="4">
    <location>
        <begin position="64"/>
        <end position="77"/>
    </location>
</feature>
<feature type="compositionally biased region" description="Polar residues" evidence="4">
    <location>
        <begin position="163"/>
        <end position="177"/>
    </location>
</feature>
<feature type="compositionally biased region" description="Basic and acidic residues" evidence="4">
    <location>
        <begin position="703"/>
        <end position="715"/>
    </location>
</feature>
<feature type="compositionally biased region" description="Polar residues" evidence="4">
    <location>
        <begin position="737"/>
        <end position="754"/>
    </location>
</feature>
<feature type="compositionally biased region" description="Low complexity" evidence="4">
    <location>
        <begin position="798"/>
        <end position="809"/>
    </location>
</feature>
<feature type="compositionally biased region" description="Basic and acidic residues" evidence="4">
    <location>
        <begin position="877"/>
        <end position="897"/>
    </location>
</feature>
<feature type="compositionally biased region" description="Low complexity" evidence="4">
    <location>
        <begin position="900"/>
        <end position="920"/>
    </location>
</feature>
<feature type="compositionally biased region" description="Acidic residues" evidence="4">
    <location>
        <begin position="921"/>
        <end position="932"/>
    </location>
</feature>
<feature type="compositionally biased region" description="Low complexity" evidence="4">
    <location>
        <begin position="936"/>
        <end position="947"/>
    </location>
</feature>
<feature type="compositionally biased region" description="Gly residues" evidence="4">
    <location>
        <begin position="984"/>
        <end position="993"/>
    </location>
</feature>
<feature type="compositionally biased region" description="Polar residues" evidence="4">
    <location>
        <begin position="1022"/>
        <end position="1037"/>
    </location>
</feature>
<feature type="modified residue" description="Phosphoserine" evidence="7">
    <location>
        <position position="70"/>
    </location>
</feature>
<feature type="modified residue" description="Phosphoserine" evidence="2">
    <location>
        <position position="137"/>
    </location>
</feature>
<feature type="modified residue" description="Phosphoserine" evidence="7 8">
    <location>
        <position position="182"/>
    </location>
</feature>
<feature type="modified residue" description="Phosphoserine" evidence="8">
    <location>
        <position position="185"/>
    </location>
</feature>
<feature type="modified residue" description="Phosphoserine" evidence="3">
    <location>
        <position position="245"/>
    </location>
</feature>
<feature type="modified residue" description="Phosphothreonine" evidence="3">
    <location>
        <position position="850"/>
    </location>
</feature>
<feature type="modified residue" description="Phosphoserine" evidence="2">
    <location>
        <position position="860"/>
    </location>
</feature>
<feature type="modified residue" description="Phosphoserine" evidence="7">
    <location>
        <position position="863"/>
    </location>
</feature>
<feature type="modified residue" description="Phosphoserine" evidence="7">
    <location>
        <position position="866"/>
    </location>
</feature>
<feature type="modified residue" description="Phosphoserine" evidence="7">
    <location>
        <position position="874"/>
    </location>
</feature>
<feature type="modified residue" description="Phosphoserine" evidence="7">
    <location>
        <position position="875"/>
    </location>
</feature>
<feature type="sequence conflict" description="In Ref. 4; AAH59194." evidence="6" ref="4">
    <original>Q</original>
    <variation>H</variation>
    <location>
        <position position="7"/>
    </location>
</feature>
<feature type="sequence conflict" description="In Ref. 1; BAB61034 and 4; AAH59194." evidence="6" ref="1 4">
    <original>L</original>
    <variation>P</variation>
    <location>
        <position position="32"/>
    </location>
</feature>
<feature type="sequence conflict" description="In Ref. 1; BAB61034." evidence="6" ref="1">
    <original>D</original>
    <variation>G</variation>
    <location>
        <position position="168"/>
    </location>
</feature>
<feature type="sequence conflict" description="In Ref. 1; BAB61034." evidence="6" ref="1">
    <original>S</original>
    <variation>R</variation>
    <location>
        <position position="199"/>
    </location>
</feature>
<feature type="sequence conflict" description="In Ref. 1; BAB61034." evidence="6" ref="1">
    <original>P</original>
    <variation>S</variation>
    <location>
        <position position="286"/>
    </location>
</feature>
<feature type="sequence conflict" description="In Ref. 1; BAB61034." evidence="6" ref="1">
    <original>P</original>
    <variation>A</variation>
    <location>
        <position position="322"/>
    </location>
</feature>
<feature type="sequence conflict" description="In Ref. 1; BAB61034." evidence="6" ref="1">
    <original>H</original>
    <variation>P</variation>
    <location>
        <position position="329"/>
    </location>
</feature>
<feature type="sequence conflict" description="In Ref. 1; BAB61034 and 4; AAH59194." evidence="6" ref="1 4">
    <original>P</original>
    <variation>L</variation>
    <location>
        <position position="711"/>
    </location>
</feature>
<feature type="sequence conflict" description="In Ref. 1; BAB61034 and 4; AAH59194." evidence="6" ref="1 4">
    <original>S</original>
    <variation>P</variation>
    <location>
        <position position="939"/>
    </location>
</feature>
<accession>Q91XT4</accession>
<accession>E9QL61</accession>
<accession>Q69Z64</accession>
<accession>Q6PCR8</accession>
<dbReference type="EMBL" id="AB063356">
    <property type="protein sequence ID" value="BAB61034.1"/>
    <property type="molecule type" value="mRNA"/>
</dbReference>
<dbReference type="EMBL" id="AK173302">
    <property type="protein sequence ID" value="BAD32580.1"/>
    <property type="status" value="ALT_INIT"/>
    <property type="molecule type" value="mRNA"/>
</dbReference>
<dbReference type="EMBL" id="AC161108">
    <property type="status" value="NOT_ANNOTATED_CDS"/>
    <property type="molecule type" value="Genomic_DNA"/>
</dbReference>
<dbReference type="EMBL" id="BC059194">
    <property type="protein sequence ID" value="AAH59194.1"/>
    <property type="molecule type" value="mRNA"/>
</dbReference>
<dbReference type="CCDS" id="CCDS15400.1"/>
<dbReference type="RefSeq" id="NP_001153458.1">
    <property type="nucleotide sequence ID" value="NM_001159986.1"/>
</dbReference>
<dbReference type="RefSeq" id="NP_203505.3">
    <property type="nucleotide sequence ID" value="NM_033354.3"/>
</dbReference>
<dbReference type="RefSeq" id="XP_017168472.1">
    <property type="nucleotide sequence ID" value="XM_017312983.2"/>
</dbReference>
<dbReference type="RefSeq" id="XP_017168473.1">
    <property type="nucleotide sequence ID" value="XM_017312984.1"/>
</dbReference>
<dbReference type="RefSeq" id="XP_036010352.1">
    <property type="nucleotide sequence ID" value="XM_036154459.1"/>
</dbReference>
<dbReference type="SMR" id="Q91XT4"/>
<dbReference type="FunCoup" id="Q91XT4">
    <property type="interactions" value="897"/>
</dbReference>
<dbReference type="STRING" id="10090.ENSMUSP00000083300"/>
<dbReference type="GlyGen" id="Q91XT4">
    <property type="glycosylation" value="2 sites"/>
</dbReference>
<dbReference type="iPTMnet" id="Q91XT4"/>
<dbReference type="PhosphoSitePlus" id="Q91XT4"/>
<dbReference type="jPOST" id="Q91XT4"/>
<dbReference type="PaxDb" id="10090-ENSMUSP00000083300"/>
<dbReference type="PeptideAtlas" id="Q91XT4"/>
<dbReference type="ProteomicsDB" id="255464"/>
<dbReference type="Antibodypedia" id="35113">
    <property type="antibodies" value="118 antibodies from 28 providers"/>
</dbReference>
<dbReference type="DNASU" id="89867"/>
<dbReference type="Ensembl" id="ENSMUST00000027881.15">
    <property type="protein sequence ID" value="ENSMUSP00000027881.9"/>
    <property type="gene ID" value="ENSMUSG00000026589.15"/>
</dbReference>
<dbReference type="Ensembl" id="ENSMUST00000086130.9">
    <property type="protein sequence ID" value="ENSMUSP00000083300.3"/>
    <property type="gene ID" value="ENSMUSG00000026589.15"/>
</dbReference>
<dbReference type="Ensembl" id="ENSMUST00000111700.8">
    <property type="protein sequence ID" value="ENSMUSP00000107329.2"/>
    <property type="gene ID" value="ENSMUSG00000026589.15"/>
</dbReference>
<dbReference type="GeneID" id="89867"/>
<dbReference type="KEGG" id="mmu:89867"/>
<dbReference type="UCSC" id="uc007ddl.2">
    <property type="organism name" value="mouse"/>
</dbReference>
<dbReference type="AGR" id="MGI:2148802"/>
<dbReference type="CTD" id="89866"/>
<dbReference type="MGI" id="MGI:2148802">
    <property type="gene designation" value="Sec16b"/>
</dbReference>
<dbReference type="VEuPathDB" id="HostDB:ENSMUSG00000026589"/>
<dbReference type="eggNOG" id="KOG1913">
    <property type="taxonomic scope" value="Eukaryota"/>
</dbReference>
<dbReference type="GeneTree" id="ENSGT00940000160138"/>
<dbReference type="HOGENOM" id="CLU_010575_0_0_1"/>
<dbReference type="InParanoid" id="Q91XT4"/>
<dbReference type="OMA" id="HPRDEGH"/>
<dbReference type="OrthoDB" id="8918678at2759"/>
<dbReference type="PhylomeDB" id="Q91XT4"/>
<dbReference type="TreeFam" id="TF316276"/>
<dbReference type="Reactome" id="R-MMU-204005">
    <property type="pathway name" value="COPII-mediated vesicle transport"/>
</dbReference>
<dbReference type="BioGRID-ORCS" id="89867">
    <property type="hits" value="0 hits in 77 CRISPR screens"/>
</dbReference>
<dbReference type="PRO" id="PR:Q91XT4"/>
<dbReference type="Proteomes" id="UP000000589">
    <property type="component" value="Chromosome 1"/>
</dbReference>
<dbReference type="RNAct" id="Q91XT4">
    <property type="molecule type" value="protein"/>
</dbReference>
<dbReference type="Bgee" id="ENSMUSG00000026589">
    <property type="expression patterns" value="Expressed in mesenchyme of lower jaw and 140 other cell types or tissues"/>
</dbReference>
<dbReference type="ExpressionAtlas" id="Q91XT4">
    <property type="expression patterns" value="baseline and differential"/>
</dbReference>
<dbReference type="GO" id="GO:0070971">
    <property type="term" value="C:endoplasmic reticulum exit site"/>
    <property type="evidence" value="ECO:0000250"/>
    <property type="project" value="UniProtKB"/>
</dbReference>
<dbReference type="GO" id="GO:0005789">
    <property type="term" value="C:endoplasmic reticulum membrane"/>
    <property type="evidence" value="ECO:0007669"/>
    <property type="project" value="UniProtKB-SubCell"/>
</dbReference>
<dbReference type="GO" id="GO:0000139">
    <property type="term" value="C:Golgi membrane"/>
    <property type="evidence" value="ECO:0007669"/>
    <property type="project" value="UniProtKB-SubCell"/>
</dbReference>
<dbReference type="GO" id="GO:0007029">
    <property type="term" value="P:endoplasmic reticulum organization"/>
    <property type="evidence" value="ECO:0007669"/>
    <property type="project" value="Ensembl"/>
</dbReference>
<dbReference type="GO" id="GO:0006888">
    <property type="term" value="P:endoplasmic reticulum to Golgi vesicle-mediated transport"/>
    <property type="evidence" value="ECO:0000250"/>
    <property type="project" value="UniProtKB"/>
</dbReference>
<dbReference type="GO" id="GO:0016559">
    <property type="term" value="P:peroxisome fission"/>
    <property type="evidence" value="ECO:0007669"/>
    <property type="project" value="Ensembl"/>
</dbReference>
<dbReference type="GO" id="GO:0010628">
    <property type="term" value="P:positive regulation of gene expression"/>
    <property type="evidence" value="ECO:0007669"/>
    <property type="project" value="Ensembl"/>
</dbReference>
<dbReference type="GO" id="GO:0070863">
    <property type="term" value="P:positive regulation of protein exit from endoplasmic reticulum"/>
    <property type="evidence" value="ECO:0007669"/>
    <property type="project" value="Ensembl"/>
</dbReference>
<dbReference type="GO" id="GO:0015031">
    <property type="term" value="P:protein transport"/>
    <property type="evidence" value="ECO:0007669"/>
    <property type="project" value="UniProtKB-KW"/>
</dbReference>
<dbReference type="CDD" id="cd09233">
    <property type="entry name" value="ACE1-Sec16-like"/>
    <property type="match status" value="1"/>
</dbReference>
<dbReference type="FunFam" id="1.25.40.1030:FF:000003">
    <property type="entry name" value="Protein transport protein sec16"/>
    <property type="match status" value="1"/>
</dbReference>
<dbReference type="Gene3D" id="1.25.40.1030">
    <property type="match status" value="1"/>
</dbReference>
<dbReference type="InterPro" id="IPR024340">
    <property type="entry name" value="Sec16_CCD"/>
</dbReference>
<dbReference type="InterPro" id="IPR024298">
    <property type="entry name" value="Sec16_Sec23-bd"/>
</dbReference>
<dbReference type="PANTHER" id="PTHR13402:SF11">
    <property type="entry name" value="PROTEIN TRANSPORT PROTEIN SEC16B"/>
    <property type="match status" value="1"/>
</dbReference>
<dbReference type="PANTHER" id="PTHR13402">
    <property type="entry name" value="RGPR-RELATED"/>
    <property type="match status" value="1"/>
</dbReference>
<dbReference type="Pfam" id="PF12932">
    <property type="entry name" value="Sec16"/>
    <property type="match status" value="1"/>
</dbReference>
<dbReference type="Pfam" id="PF12931">
    <property type="entry name" value="TPR_Sec16"/>
    <property type="match status" value="1"/>
</dbReference>